<feature type="chain" id="PRO_0000336191" description="UPF0102 protein IL0423">
    <location>
        <begin position="1"/>
        <end position="116"/>
    </location>
</feature>
<name>Y423_IDILO</name>
<keyword id="KW-1185">Reference proteome</keyword>
<reference key="1">
    <citation type="journal article" date="2004" name="Proc. Natl. Acad. Sci. U.S.A.">
        <title>Genome sequence of the deep-sea gamma-proteobacterium Idiomarina loihiensis reveals amino acid fermentation as a source of carbon and energy.</title>
        <authorList>
            <person name="Hou S."/>
            <person name="Saw J.H."/>
            <person name="Lee K.S."/>
            <person name="Freitas T.A."/>
            <person name="Belisle C."/>
            <person name="Kawarabayasi Y."/>
            <person name="Donachie S.P."/>
            <person name="Pikina A."/>
            <person name="Galperin M.Y."/>
            <person name="Koonin E.V."/>
            <person name="Makarova K.S."/>
            <person name="Omelchenko M.V."/>
            <person name="Sorokin A."/>
            <person name="Wolf Y.I."/>
            <person name="Li Q.X."/>
            <person name="Keum Y.S."/>
            <person name="Campbell S."/>
            <person name="Denery J."/>
            <person name="Aizawa S."/>
            <person name="Shibata S."/>
            <person name="Malahoff A."/>
            <person name="Alam M."/>
        </authorList>
    </citation>
    <scope>NUCLEOTIDE SEQUENCE [LARGE SCALE GENOMIC DNA]</scope>
    <source>
        <strain>ATCC BAA-735 / DSM 15497 / L2-TR</strain>
    </source>
</reference>
<protein>
    <recommendedName>
        <fullName evidence="1">UPF0102 protein IL0423</fullName>
    </recommendedName>
</protein>
<evidence type="ECO:0000255" key="1">
    <source>
        <dbReference type="HAMAP-Rule" id="MF_00048"/>
    </source>
</evidence>
<dbReference type="EMBL" id="AE017340">
    <property type="protein sequence ID" value="AAV81266.1"/>
    <property type="molecule type" value="Genomic_DNA"/>
</dbReference>
<dbReference type="RefSeq" id="WP_011233684.1">
    <property type="nucleotide sequence ID" value="NC_006512.1"/>
</dbReference>
<dbReference type="SMR" id="Q5R0L0"/>
<dbReference type="STRING" id="283942.IL0423"/>
<dbReference type="GeneID" id="41335575"/>
<dbReference type="KEGG" id="ilo:IL0423"/>
<dbReference type="eggNOG" id="COG0792">
    <property type="taxonomic scope" value="Bacteria"/>
</dbReference>
<dbReference type="HOGENOM" id="CLU_115353_1_1_6"/>
<dbReference type="OrthoDB" id="9794876at2"/>
<dbReference type="Proteomes" id="UP000001171">
    <property type="component" value="Chromosome"/>
</dbReference>
<dbReference type="GO" id="GO:0003676">
    <property type="term" value="F:nucleic acid binding"/>
    <property type="evidence" value="ECO:0007669"/>
    <property type="project" value="InterPro"/>
</dbReference>
<dbReference type="Gene3D" id="3.40.1350.10">
    <property type="match status" value="1"/>
</dbReference>
<dbReference type="HAMAP" id="MF_00048">
    <property type="entry name" value="UPF0102"/>
    <property type="match status" value="1"/>
</dbReference>
<dbReference type="InterPro" id="IPR011335">
    <property type="entry name" value="Restrct_endonuc-II-like"/>
</dbReference>
<dbReference type="InterPro" id="IPR011856">
    <property type="entry name" value="tRNA_endonuc-like_dom_sf"/>
</dbReference>
<dbReference type="InterPro" id="IPR003509">
    <property type="entry name" value="UPF0102_YraN-like"/>
</dbReference>
<dbReference type="NCBIfam" id="NF009150">
    <property type="entry name" value="PRK12497.1-3"/>
    <property type="match status" value="1"/>
</dbReference>
<dbReference type="NCBIfam" id="TIGR00252">
    <property type="entry name" value="YraN family protein"/>
    <property type="match status" value="1"/>
</dbReference>
<dbReference type="PANTHER" id="PTHR34039">
    <property type="entry name" value="UPF0102 PROTEIN YRAN"/>
    <property type="match status" value="1"/>
</dbReference>
<dbReference type="PANTHER" id="PTHR34039:SF1">
    <property type="entry name" value="UPF0102 PROTEIN YRAN"/>
    <property type="match status" value="1"/>
</dbReference>
<dbReference type="Pfam" id="PF02021">
    <property type="entry name" value="UPF0102"/>
    <property type="match status" value="1"/>
</dbReference>
<dbReference type="SUPFAM" id="SSF52980">
    <property type="entry name" value="Restriction endonuclease-like"/>
    <property type="match status" value="1"/>
</dbReference>
<sequence>MQEVVTGKRAELLSAEFLKKNNLTIICKNYRIDGGEVDIIARDGHYWVFCEVKFRDDESFAAVIEQIQPQQCRRIRYTARHYLLSNNIDEHTAAIRFDVIAIVGQPTKIEWFKDAF</sequence>
<proteinExistence type="inferred from homology"/>
<comment type="similarity">
    <text evidence="1">Belongs to the UPF0102 family.</text>
</comment>
<gene>
    <name type="ordered locus">IL0423</name>
</gene>
<organism>
    <name type="scientific">Idiomarina loihiensis (strain ATCC BAA-735 / DSM 15497 / L2-TR)</name>
    <dbReference type="NCBI Taxonomy" id="283942"/>
    <lineage>
        <taxon>Bacteria</taxon>
        <taxon>Pseudomonadati</taxon>
        <taxon>Pseudomonadota</taxon>
        <taxon>Gammaproteobacteria</taxon>
        <taxon>Alteromonadales</taxon>
        <taxon>Idiomarinaceae</taxon>
        <taxon>Idiomarina</taxon>
    </lineage>
</organism>
<accession>Q5R0L0</accession>